<organism>
    <name type="scientific">Polynucleobacter necessarius subsp. necessarius (strain STIR1)</name>
    <dbReference type="NCBI Taxonomy" id="452638"/>
    <lineage>
        <taxon>Bacteria</taxon>
        <taxon>Pseudomonadati</taxon>
        <taxon>Pseudomonadota</taxon>
        <taxon>Betaproteobacteria</taxon>
        <taxon>Burkholderiales</taxon>
        <taxon>Burkholderiaceae</taxon>
        <taxon>Polynucleobacter</taxon>
    </lineage>
</organism>
<feature type="chain" id="PRO_1000141718" description="DNA-directed RNA polymerase subunit beta">
    <location>
        <begin position="1"/>
        <end position="1366"/>
    </location>
</feature>
<accession>B1XSP3</accession>
<comment type="function">
    <text evidence="1">DNA-dependent RNA polymerase catalyzes the transcription of DNA into RNA using the four ribonucleoside triphosphates as substrates.</text>
</comment>
<comment type="catalytic activity">
    <reaction evidence="1">
        <text>RNA(n) + a ribonucleoside 5'-triphosphate = RNA(n+1) + diphosphate</text>
        <dbReference type="Rhea" id="RHEA:21248"/>
        <dbReference type="Rhea" id="RHEA-COMP:14527"/>
        <dbReference type="Rhea" id="RHEA-COMP:17342"/>
        <dbReference type="ChEBI" id="CHEBI:33019"/>
        <dbReference type="ChEBI" id="CHEBI:61557"/>
        <dbReference type="ChEBI" id="CHEBI:140395"/>
        <dbReference type="EC" id="2.7.7.6"/>
    </reaction>
</comment>
<comment type="subunit">
    <text evidence="1">The RNAP catalytic core consists of 2 alpha, 1 beta, 1 beta' and 1 omega subunit. When a sigma factor is associated with the core the holoenzyme is formed, which can initiate transcription.</text>
</comment>
<comment type="similarity">
    <text evidence="1">Belongs to the RNA polymerase beta chain family.</text>
</comment>
<sequence>MNYSFTERKRVRKSFAKRVNNHQVPYLIATQLESYAKFLQADKPAMSRLTEGLQAAFTSAFPIVSNNGYARMEYVSYQLSQPPFDVKECQQRGYTYHSALRAKVRLIIYDREAPTKVKEVKESEVYMGEIPLMTENGSFVINGTERVIVSQLHRSPGVFFEHDKGKTHSSGKLLFSARIIPYRGSWLDFEFDPKDILYFRIDRRRKMPVTILLKAIGLNNEQILANFFNFDHFSLTANGGSMEFVPERLRGQLASFDVLDENGVVVIQKDKRINTKHIRELEAAKTKTIAVPDDYLIGRVVARNIVDPDSGEILAYANDEITEELLATLRDAGIKQLETIYTNDLDSGAYISQTLRTDETADQMAARIAIYRMLRPGEPPIEDAVEVLFQRLFYSEDTYDLSRVGRMKVNSRLNRPEMEGPMVLSSEDILDTIKSLVDLRNGKGEVDDIDHLGNRRVRCVGELAENQFRAGLSRVERAVKERLGQAETENLMPHDLTNSKPISSAIREFFGSSQLSQFMDQTNPLSEITHKRRISALGPGGLMRERAGFEVRDVHPTHYGRVCPIETPEGPNIGLINSLALFARLNEHGFLETPYRKVSNSKVSDEVVYLSAIEEAKYVIAQANATIDKSGKLADELVSARQAGETMMVSPERIDFIDVAPSQIVSAAASLVPFLEHDDANRALMGANMQRQAVPCLRPDKPLVGTGLERIVAVDSGTVVLAARGGIVDYVDANRVVIRVNDDETTAGEVGVDIYNLIKYTRSNQNTNINQRPIVKVGDRVARGDVVADGASTDLGELALGQNMTVAFMPWNGYNFEDSILISEKVVADDRYTSIHIEELSVVARDTKLGSEEITRDISNLAESQLSRLDESGIVYIGAEVEAGDVLVGKVTPKGETTLTPEEKLLRAIFGEKASDVKDTSLRVPSGMIGTIIDVQVFTREGIERDARAQSIIQEELQRYRLGLNDQLRIVEGDAFMRLEKLLIGKVANGGPKKLAKGTKIDKEYLADLDKYHRFDVRPADDEVASQVEAIKSSIEAKRKQFDEAFEEKRTKLTQGDDLQPGVTKMVKVYLAVKRRLQPGDKMAGRHGNKGVVSKIAPAEDMPFMADGRPVDIVLNPLGVPSRMNVGQILETHLGWAAQGIGKRVDEMVRQQAKQAELREFLKQLYNETGRIEDIDNFTDEQITVLAENLRQGLPFATPVFDGATEAEIGRMLELAYPEEVATSLKMTPSRQQMILCDGRTGDQFERPATVGVMHVLKLHHLVDDKMHARSTGPYSLVTQQPLGGKAQFGGQRFGEMEVWALEAYGASYVLQEMLTVKSDDVAGRTKVYENIVKGEHTIDAGMPESFNVLVKEIRSLGIEIDMERN</sequence>
<name>RPOB_POLNS</name>
<evidence type="ECO:0000255" key="1">
    <source>
        <dbReference type="HAMAP-Rule" id="MF_01321"/>
    </source>
</evidence>
<gene>
    <name evidence="1" type="primary">rpoB</name>
    <name type="ordered locus">Pnec_0042</name>
</gene>
<dbReference type="EC" id="2.7.7.6" evidence="1"/>
<dbReference type="EMBL" id="CP001010">
    <property type="protein sequence ID" value="ACB43370.1"/>
    <property type="molecule type" value="Genomic_DNA"/>
</dbReference>
<dbReference type="SMR" id="B1XSP3"/>
<dbReference type="STRING" id="452638.Pnec_0042"/>
<dbReference type="KEGG" id="pne:Pnec_0042"/>
<dbReference type="eggNOG" id="COG0085">
    <property type="taxonomic scope" value="Bacteria"/>
</dbReference>
<dbReference type="HOGENOM" id="CLU_000524_4_0_4"/>
<dbReference type="OrthoDB" id="9803954at2"/>
<dbReference type="GO" id="GO:0000428">
    <property type="term" value="C:DNA-directed RNA polymerase complex"/>
    <property type="evidence" value="ECO:0007669"/>
    <property type="project" value="UniProtKB-KW"/>
</dbReference>
<dbReference type="GO" id="GO:0003677">
    <property type="term" value="F:DNA binding"/>
    <property type="evidence" value="ECO:0007669"/>
    <property type="project" value="UniProtKB-UniRule"/>
</dbReference>
<dbReference type="GO" id="GO:0003899">
    <property type="term" value="F:DNA-directed RNA polymerase activity"/>
    <property type="evidence" value="ECO:0007669"/>
    <property type="project" value="UniProtKB-UniRule"/>
</dbReference>
<dbReference type="GO" id="GO:0032549">
    <property type="term" value="F:ribonucleoside binding"/>
    <property type="evidence" value="ECO:0007669"/>
    <property type="project" value="InterPro"/>
</dbReference>
<dbReference type="GO" id="GO:0006351">
    <property type="term" value="P:DNA-templated transcription"/>
    <property type="evidence" value="ECO:0007669"/>
    <property type="project" value="UniProtKB-UniRule"/>
</dbReference>
<dbReference type="CDD" id="cd00653">
    <property type="entry name" value="RNA_pol_B_RPB2"/>
    <property type="match status" value="1"/>
</dbReference>
<dbReference type="FunFam" id="2.40.50.100:FF:000006">
    <property type="entry name" value="DNA-directed RNA polymerase subunit beta"/>
    <property type="match status" value="1"/>
</dbReference>
<dbReference type="FunFam" id="3.90.1800.10:FF:000001">
    <property type="entry name" value="DNA-directed RNA polymerase subunit beta"/>
    <property type="match status" value="1"/>
</dbReference>
<dbReference type="Gene3D" id="2.40.50.100">
    <property type="match status" value="1"/>
</dbReference>
<dbReference type="Gene3D" id="2.40.50.150">
    <property type="match status" value="1"/>
</dbReference>
<dbReference type="Gene3D" id="3.90.1100.10">
    <property type="match status" value="2"/>
</dbReference>
<dbReference type="Gene3D" id="2.30.150.10">
    <property type="entry name" value="DNA-directed RNA polymerase, beta subunit, external 1 domain"/>
    <property type="match status" value="1"/>
</dbReference>
<dbReference type="Gene3D" id="2.40.270.10">
    <property type="entry name" value="DNA-directed RNA polymerase, subunit 2, domain 6"/>
    <property type="match status" value="2"/>
</dbReference>
<dbReference type="Gene3D" id="3.90.1800.10">
    <property type="entry name" value="RNA polymerase alpha subunit dimerisation domain"/>
    <property type="match status" value="1"/>
</dbReference>
<dbReference type="Gene3D" id="3.90.1110.10">
    <property type="entry name" value="RNA polymerase Rpb2, domain 2"/>
    <property type="match status" value="2"/>
</dbReference>
<dbReference type="HAMAP" id="MF_01321">
    <property type="entry name" value="RNApol_bact_RpoB"/>
    <property type="match status" value="1"/>
</dbReference>
<dbReference type="InterPro" id="IPR042107">
    <property type="entry name" value="DNA-dir_RNA_pol_bsu_ext_1_sf"/>
</dbReference>
<dbReference type="InterPro" id="IPR019462">
    <property type="entry name" value="DNA-dir_RNA_pol_bsu_external_1"/>
</dbReference>
<dbReference type="InterPro" id="IPR015712">
    <property type="entry name" value="DNA-dir_RNA_pol_su2"/>
</dbReference>
<dbReference type="InterPro" id="IPR007120">
    <property type="entry name" value="DNA-dir_RNAP_su2_dom"/>
</dbReference>
<dbReference type="InterPro" id="IPR037033">
    <property type="entry name" value="DNA-dir_RNAP_su2_hyb_sf"/>
</dbReference>
<dbReference type="InterPro" id="IPR010243">
    <property type="entry name" value="RNA_pol_bsu_bac"/>
</dbReference>
<dbReference type="InterPro" id="IPR007121">
    <property type="entry name" value="RNA_pol_bsu_CS"/>
</dbReference>
<dbReference type="InterPro" id="IPR007644">
    <property type="entry name" value="RNA_pol_bsu_protrusion"/>
</dbReference>
<dbReference type="InterPro" id="IPR007642">
    <property type="entry name" value="RNA_pol_Rpb2_2"/>
</dbReference>
<dbReference type="InterPro" id="IPR037034">
    <property type="entry name" value="RNA_pol_Rpb2_2_sf"/>
</dbReference>
<dbReference type="InterPro" id="IPR007645">
    <property type="entry name" value="RNA_pol_Rpb2_3"/>
</dbReference>
<dbReference type="InterPro" id="IPR007641">
    <property type="entry name" value="RNA_pol_Rpb2_7"/>
</dbReference>
<dbReference type="InterPro" id="IPR014724">
    <property type="entry name" value="RNA_pol_RPB2_OB-fold"/>
</dbReference>
<dbReference type="NCBIfam" id="NF001616">
    <property type="entry name" value="PRK00405.1"/>
    <property type="match status" value="1"/>
</dbReference>
<dbReference type="NCBIfam" id="TIGR02013">
    <property type="entry name" value="rpoB"/>
    <property type="match status" value="1"/>
</dbReference>
<dbReference type="PANTHER" id="PTHR20856">
    <property type="entry name" value="DNA-DIRECTED RNA POLYMERASE I SUBUNIT 2"/>
    <property type="match status" value="1"/>
</dbReference>
<dbReference type="Pfam" id="PF04563">
    <property type="entry name" value="RNA_pol_Rpb2_1"/>
    <property type="match status" value="1"/>
</dbReference>
<dbReference type="Pfam" id="PF04561">
    <property type="entry name" value="RNA_pol_Rpb2_2"/>
    <property type="match status" value="2"/>
</dbReference>
<dbReference type="Pfam" id="PF04565">
    <property type="entry name" value="RNA_pol_Rpb2_3"/>
    <property type="match status" value="1"/>
</dbReference>
<dbReference type="Pfam" id="PF10385">
    <property type="entry name" value="RNA_pol_Rpb2_45"/>
    <property type="match status" value="1"/>
</dbReference>
<dbReference type="Pfam" id="PF00562">
    <property type="entry name" value="RNA_pol_Rpb2_6"/>
    <property type="match status" value="1"/>
</dbReference>
<dbReference type="Pfam" id="PF04560">
    <property type="entry name" value="RNA_pol_Rpb2_7"/>
    <property type="match status" value="1"/>
</dbReference>
<dbReference type="SUPFAM" id="SSF64484">
    <property type="entry name" value="beta and beta-prime subunits of DNA dependent RNA-polymerase"/>
    <property type="match status" value="1"/>
</dbReference>
<dbReference type="PROSITE" id="PS01166">
    <property type="entry name" value="RNA_POL_BETA"/>
    <property type="match status" value="1"/>
</dbReference>
<keyword id="KW-0240">DNA-directed RNA polymerase</keyword>
<keyword id="KW-0548">Nucleotidyltransferase</keyword>
<keyword id="KW-0804">Transcription</keyword>
<keyword id="KW-0808">Transferase</keyword>
<reference key="1">
    <citation type="journal article" date="2013" name="Proc. Natl. Acad. Sci. U.S.A.">
        <title>Polynucleobacter necessarius, a model for genome reduction in both free-living and symbiotic bacteria.</title>
        <authorList>
            <person name="Boscaro V."/>
            <person name="Felletti M."/>
            <person name="Vannini C."/>
            <person name="Ackerman M.S."/>
            <person name="Chain P.S."/>
            <person name="Malfatti S."/>
            <person name="Vergez L.M."/>
            <person name="Shin M."/>
            <person name="Doak T.G."/>
            <person name="Lynch M."/>
            <person name="Petroni G."/>
        </authorList>
    </citation>
    <scope>NUCLEOTIDE SEQUENCE [LARGE SCALE GENOMIC DNA]</scope>
    <source>
        <strain>STIR1</strain>
    </source>
</reference>
<protein>
    <recommendedName>
        <fullName evidence="1">DNA-directed RNA polymerase subunit beta</fullName>
        <shortName evidence="1">RNAP subunit beta</shortName>
        <ecNumber evidence="1">2.7.7.6</ecNumber>
    </recommendedName>
    <alternativeName>
        <fullName evidence="1">RNA polymerase subunit beta</fullName>
    </alternativeName>
    <alternativeName>
        <fullName evidence="1">Transcriptase subunit beta</fullName>
    </alternativeName>
</protein>
<proteinExistence type="inferred from homology"/>